<organism>
    <name type="scientific">Arabidopsis thaliana</name>
    <name type="common">Mouse-ear cress</name>
    <dbReference type="NCBI Taxonomy" id="3702"/>
    <lineage>
        <taxon>Eukaryota</taxon>
        <taxon>Viridiplantae</taxon>
        <taxon>Streptophyta</taxon>
        <taxon>Embryophyta</taxon>
        <taxon>Tracheophyta</taxon>
        <taxon>Spermatophyta</taxon>
        <taxon>Magnoliopsida</taxon>
        <taxon>eudicotyledons</taxon>
        <taxon>Gunneridae</taxon>
        <taxon>Pentapetalae</taxon>
        <taxon>rosids</taxon>
        <taxon>malvids</taxon>
        <taxon>Brassicales</taxon>
        <taxon>Brassicaceae</taxon>
        <taxon>Camelineae</taxon>
        <taxon>Arabidopsis</taxon>
    </lineage>
</organism>
<dbReference type="EMBL" id="AJ245908">
    <property type="protein sequence ID" value="CAB52678.1"/>
    <property type="molecule type" value="mRNA"/>
</dbReference>
<dbReference type="EMBL" id="AL035353">
    <property type="protein sequence ID" value="CAA22977.1"/>
    <property type="molecule type" value="Genomic_DNA"/>
</dbReference>
<dbReference type="EMBL" id="AL161573">
    <property type="protein sequence ID" value="CAB81463.1"/>
    <property type="molecule type" value="Genomic_DNA"/>
</dbReference>
<dbReference type="EMBL" id="CP002687">
    <property type="protein sequence ID" value="AEE85537.1"/>
    <property type="molecule type" value="Genomic_DNA"/>
</dbReference>
<dbReference type="EMBL" id="AY042790">
    <property type="protein sequence ID" value="AAK68730.1"/>
    <property type="molecule type" value="mRNA"/>
</dbReference>
<dbReference type="EMBL" id="AY081687">
    <property type="protein sequence ID" value="AAM10249.1"/>
    <property type="molecule type" value="mRNA"/>
</dbReference>
<dbReference type="PIR" id="T04524">
    <property type="entry name" value="T04524"/>
</dbReference>
<dbReference type="PDB" id="2O01">
    <property type="method" value="X-ray"/>
    <property type="resolution" value="3.40 A"/>
    <property type="chains" value="E=81-142"/>
</dbReference>
<dbReference type="PDB" id="2WSC">
    <property type="method" value="X-ray"/>
    <property type="resolution" value="3.30 A"/>
    <property type="chains" value="E=1-143"/>
</dbReference>
<dbReference type="PDB" id="2WSE">
    <property type="method" value="X-ray"/>
    <property type="resolution" value="3.49 A"/>
    <property type="chains" value="E=1-143"/>
</dbReference>
<dbReference type="PDB" id="2WSF">
    <property type="method" value="X-ray"/>
    <property type="resolution" value="3.48 A"/>
    <property type="chains" value="E=1-143"/>
</dbReference>
<dbReference type="PDB" id="7WFD">
    <property type="method" value="EM"/>
    <property type="resolution" value="3.25 A"/>
    <property type="chains" value="AE=1-143"/>
</dbReference>
<dbReference type="PDB" id="7WFE">
    <property type="method" value="EM"/>
    <property type="resolution" value="3.25 A"/>
    <property type="chains" value="BE=1-143"/>
</dbReference>
<dbReference type="PDB" id="7WG5">
    <property type="method" value="EM"/>
    <property type="resolution" value="3.89 A"/>
    <property type="chains" value="AE/BE=1-143"/>
</dbReference>
<dbReference type="PDB" id="8J6Z">
    <property type="method" value="EM"/>
    <property type="resolution" value="2.79 A"/>
    <property type="chains" value="E=1-143"/>
</dbReference>
<dbReference type="PDB" id="8J7A">
    <property type="method" value="EM"/>
    <property type="resolution" value="3.06 A"/>
    <property type="chains" value="E=1-143"/>
</dbReference>
<dbReference type="PDB" id="8J7B">
    <property type="method" value="EM"/>
    <property type="resolution" value="3.22 A"/>
    <property type="chains" value="E=1-143"/>
</dbReference>
<dbReference type="PDBsum" id="2O01"/>
<dbReference type="PDBsum" id="2WSC"/>
<dbReference type="PDBsum" id="2WSE"/>
<dbReference type="PDBsum" id="2WSF"/>
<dbReference type="PDBsum" id="7WFD"/>
<dbReference type="PDBsum" id="7WFE"/>
<dbReference type="PDBsum" id="7WG5"/>
<dbReference type="PDBsum" id="8J6Z"/>
<dbReference type="PDBsum" id="8J7A"/>
<dbReference type="PDBsum" id="8J7B"/>
<dbReference type="EMDB" id="EMD-32462"/>
<dbReference type="EMDB" id="EMD-32463"/>
<dbReference type="EMDB" id="EMD-32477"/>
<dbReference type="EMDB" id="EMD-36021"/>
<dbReference type="EMDB" id="EMD-36036"/>
<dbReference type="EMDB" id="EMD-36037"/>
<dbReference type="SMR" id="Q9S831"/>
<dbReference type="BioGRID" id="14283">
    <property type="interactions" value="7"/>
</dbReference>
<dbReference type="FunCoup" id="Q9S831">
    <property type="interactions" value="1185"/>
</dbReference>
<dbReference type="STRING" id="3702.Q9S831"/>
<dbReference type="iPTMnet" id="Q9S831"/>
<dbReference type="PaxDb" id="3702-AT4G28750.1"/>
<dbReference type="ProteomicsDB" id="226306"/>
<dbReference type="EnsemblPlants" id="AT4G28750.1">
    <property type="protein sequence ID" value="AT4G28750.1"/>
    <property type="gene ID" value="AT4G28750"/>
</dbReference>
<dbReference type="Gramene" id="AT4G28750.1">
    <property type="protein sequence ID" value="AT4G28750.1"/>
    <property type="gene ID" value="AT4G28750"/>
</dbReference>
<dbReference type="KEGG" id="ath:AT4G28750"/>
<dbReference type="Araport" id="AT4G28750"/>
<dbReference type="TAIR" id="AT4G28750">
    <property type="gene designation" value="PSAE-1"/>
</dbReference>
<dbReference type="eggNOG" id="ENOG502S9HV">
    <property type="taxonomic scope" value="Eukaryota"/>
</dbReference>
<dbReference type="HOGENOM" id="CLU_136462_0_0_1"/>
<dbReference type="InParanoid" id="Q9S831"/>
<dbReference type="OMA" id="YFRIRTN"/>
<dbReference type="OrthoDB" id="2161449at2759"/>
<dbReference type="PhylomeDB" id="Q9S831"/>
<dbReference type="EvolutionaryTrace" id="Q9S831"/>
<dbReference type="PRO" id="PR:Q9S831"/>
<dbReference type="Proteomes" id="UP000006548">
    <property type="component" value="Chromosome 4"/>
</dbReference>
<dbReference type="ExpressionAtlas" id="Q9S831">
    <property type="expression patterns" value="baseline and differential"/>
</dbReference>
<dbReference type="GO" id="GO:0009507">
    <property type="term" value="C:chloroplast"/>
    <property type="evidence" value="ECO:0007005"/>
    <property type="project" value="TAIR"/>
</dbReference>
<dbReference type="GO" id="GO:0009941">
    <property type="term" value="C:chloroplast envelope"/>
    <property type="evidence" value="ECO:0007005"/>
    <property type="project" value="TAIR"/>
</dbReference>
<dbReference type="GO" id="GO:0009534">
    <property type="term" value="C:chloroplast thylakoid"/>
    <property type="evidence" value="ECO:0007005"/>
    <property type="project" value="TAIR"/>
</dbReference>
<dbReference type="GO" id="GO:0009535">
    <property type="term" value="C:chloroplast thylakoid membrane"/>
    <property type="evidence" value="ECO:0007005"/>
    <property type="project" value="TAIR"/>
</dbReference>
<dbReference type="GO" id="GO:0009538">
    <property type="term" value="C:photosystem I reaction center"/>
    <property type="evidence" value="ECO:0007669"/>
    <property type="project" value="InterPro"/>
</dbReference>
<dbReference type="GO" id="GO:0005886">
    <property type="term" value="C:plasma membrane"/>
    <property type="evidence" value="ECO:0007005"/>
    <property type="project" value="TAIR"/>
</dbReference>
<dbReference type="GO" id="GO:0010287">
    <property type="term" value="C:plastoglobule"/>
    <property type="evidence" value="ECO:0007005"/>
    <property type="project" value="TAIR"/>
</dbReference>
<dbReference type="GO" id="GO:0009579">
    <property type="term" value="C:thylakoid"/>
    <property type="evidence" value="ECO:0007005"/>
    <property type="project" value="TAIR"/>
</dbReference>
<dbReference type="GO" id="GO:0003729">
    <property type="term" value="F:mRNA binding"/>
    <property type="evidence" value="ECO:0000314"/>
    <property type="project" value="TAIR"/>
</dbReference>
<dbReference type="GO" id="GO:0019904">
    <property type="term" value="F:protein domain specific binding"/>
    <property type="evidence" value="ECO:0000353"/>
    <property type="project" value="CAFA"/>
</dbReference>
<dbReference type="GO" id="GO:0015979">
    <property type="term" value="P:photosynthesis"/>
    <property type="evidence" value="ECO:0007669"/>
    <property type="project" value="UniProtKB-KW"/>
</dbReference>
<dbReference type="FunFam" id="2.30.30.50:FF:000001">
    <property type="entry name" value="Photosystem I reaction center subunit IV, chloroplastic"/>
    <property type="match status" value="1"/>
</dbReference>
<dbReference type="Gene3D" id="2.30.30.50">
    <property type="match status" value="1"/>
</dbReference>
<dbReference type="InterPro" id="IPR008990">
    <property type="entry name" value="Elect_transpt_acc-like_dom_sf"/>
</dbReference>
<dbReference type="InterPro" id="IPR003375">
    <property type="entry name" value="PSI_PsaE"/>
</dbReference>
<dbReference type="PANTHER" id="PTHR34549">
    <property type="entry name" value="PHOTOSYSTEM I REACTION CENTER SUBUNIT IV A, CHLOROPLASTIC-RELATED"/>
    <property type="match status" value="1"/>
</dbReference>
<dbReference type="PANTHER" id="PTHR34549:SF10">
    <property type="entry name" value="PHOTOSYSTEM I REACTION CENTER SUBUNIT IV A, CHLOROPLASTIC-RELATED"/>
    <property type="match status" value="1"/>
</dbReference>
<dbReference type="Pfam" id="PF02427">
    <property type="entry name" value="PSI_PsaE"/>
    <property type="match status" value="1"/>
</dbReference>
<dbReference type="SUPFAM" id="SSF50090">
    <property type="entry name" value="Electron transport accessory proteins"/>
    <property type="match status" value="1"/>
</dbReference>
<feature type="transit peptide" description="Chloroplast" evidence="1">
    <location>
        <begin position="1"/>
        <end position="44"/>
    </location>
</feature>
<feature type="chain" id="PRO_0000029378" description="Photosystem I reaction center subunit IV A, chloroplastic">
    <location>
        <begin position="45"/>
        <end position="143"/>
    </location>
</feature>
<feature type="region of interest" description="Disordered" evidence="2">
    <location>
        <begin position="43"/>
        <end position="85"/>
    </location>
</feature>
<feature type="compositionally biased region" description="Low complexity" evidence="2">
    <location>
        <begin position="48"/>
        <end position="73"/>
    </location>
</feature>
<feature type="strand" evidence="5">
    <location>
        <begin position="83"/>
        <end position="85"/>
    </location>
</feature>
<feature type="strand" evidence="6">
    <location>
        <begin position="86"/>
        <end position="89"/>
    </location>
</feature>
<feature type="strand" evidence="7">
    <location>
        <begin position="92"/>
        <end position="94"/>
    </location>
</feature>
<feature type="turn" evidence="7">
    <location>
        <begin position="95"/>
        <end position="98"/>
    </location>
</feature>
<feature type="strand" evidence="6">
    <location>
        <begin position="100"/>
        <end position="106"/>
    </location>
</feature>
<feature type="strand" evidence="4">
    <location>
        <begin position="111"/>
        <end position="113"/>
    </location>
</feature>
<feature type="strand" evidence="6">
    <location>
        <begin position="116"/>
        <end position="119"/>
    </location>
</feature>
<feature type="strand" evidence="5">
    <location>
        <begin position="125"/>
        <end position="127"/>
    </location>
</feature>
<feature type="strand" evidence="6">
    <location>
        <begin position="130"/>
        <end position="133"/>
    </location>
</feature>
<feature type="strand" evidence="6">
    <location>
        <begin position="137"/>
        <end position="140"/>
    </location>
</feature>
<protein>
    <recommendedName>
        <fullName>Photosystem I reaction center subunit IV A, chloroplastic</fullName>
        <shortName>PSI-E A</shortName>
    </recommendedName>
</protein>
<reference key="1">
    <citation type="submission" date="1999-08" db="EMBL/GenBank/DDBJ databases">
        <title>Sequences and map position of 31 Arabidopsis thaliana cDNAs encoding organellar polypeptides.</title>
        <authorList>
            <person name="Legen J."/>
            <person name="Misera S."/>
            <person name="Herrmann R.G."/>
            <person name="Altschmied L."/>
        </authorList>
    </citation>
    <scope>NUCLEOTIDE SEQUENCE [MRNA]</scope>
    <source>
        <strain>cv. Columbia</strain>
    </source>
</reference>
<reference key="2">
    <citation type="journal article" date="1999" name="Nature">
        <title>Sequence and analysis of chromosome 4 of the plant Arabidopsis thaliana.</title>
        <authorList>
            <person name="Mayer K.F.X."/>
            <person name="Schueller C."/>
            <person name="Wambutt R."/>
            <person name="Murphy G."/>
            <person name="Volckaert G."/>
            <person name="Pohl T."/>
            <person name="Duesterhoeft A."/>
            <person name="Stiekema W."/>
            <person name="Entian K.-D."/>
            <person name="Terryn N."/>
            <person name="Harris B."/>
            <person name="Ansorge W."/>
            <person name="Brandt P."/>
            <person name="Grivell L.A."/>
            <person name="Rieger M."/>
            <person name="Weichselgartner M."/>
            <person name="de Simone V."/>
            <person name="Obermaier B."/>
            <person name="Mache R."/>
            <person name="Mueller M."/>
            <person name="Kreis M."/>
            <person name="Delseny M."/>
            <person name="Puigdomenech P."/>
            <person name="Watson M."/>
            <person name="Schmidtheini T."/>
            <person name="Reichert B."/>
            <person name="Portetelle D."/>
            <person name="Perez-Alonso M."/>
            <person name="Boutry M."/>
            <person name="Bancroft I."/>
            <person name="Vos P."/>
            <person name="Hoheisel J."/>
            <person name="Zimmermann W."/>
            <person name="Wedler H."/>
            <person name="Ridley P."/>
            <person name="Langham S.-A."/>
            <person name="McCullagh B."/>
            <person name="Bilham L."/>
            <person name="Robben J."/>
            <person name="van der Schueren J."/>
            <person name="Grymonprez B."/>
            <person name="Chuang Y.-J."/>
            <person name="Vandenbussche F."/>
            <person name="Braeken M."/>
            <person name="Weltjens I."/>
            <person name="Voet M."/>
            <person name="Bastiaens I."/>
            <person name="Aert R."/>
            <person name="Defoor E."/>
            <person name="Weitzenegger T."/>
            <person name="Bothe G."/>
            <person name="Ramsperger U."/>
            <person name="Hilbert H."/>
            <person name="Braun M."/>
            <person name="Holzer E."/>
            <person name="Brandt A."/>
            <person name="Peters S."/>
            <person name="van Staveren M."/>
            <person name="Dirkse W."/>
            <person name="Mooijman P."/>
            <person name="Klein Lankhorst R."/>
            <person name="Rose M."/>
            <person name="Hauf J."/>
            <person name="Koetter P."/>
            <person name="Berneiser S."/>
            <person name="Hempel S."/>
            <person name="Feldpausch M."/>
            <person name="Lamberth S."/>
            <person name="Van den Daele H."/>
            <person name="De Keyser A."/>
            <person name="Buysshaert C."/>
            <person name="Gielen J."/>
            <person name="Villarroel R."/>
            <person name="De Clercq R."/>
            <person name="van Montagu M."/>
            <person name="Rogers J."/>
            <person name="Cronin A."/>
            <person name="Quail M.A."/>
            <person name="Bray-Allen S."/>
            <person name="Clark L."/>
            <person name="Doggett J."/>
            <person name="Hall S."/>
            <person name="Kay M."/>
            <person name="Lennard N."/>
            <person name="McLay K."/>
            <person name="Mayes R."/>
            <person name="Pettett A."/>
            <person name="Rajandream M.A."/>
            <person name="Lyne M."/>
            <person name="Benes V."/>
            <person name="Rechmann S."/>
            <person name="Borkova D."/>
            <person name="Bloecker H."/>
            <person name="Scharfe M."/>
            <person name="Grimm M."/>
            <person name="Loehnert T.-H."/>
            <person name="Dose S."/>
            <person name="de Haan M."/>
            <person name="Maarse A.C."/>
            <person name="Schaefer M."/>
            <person name="Mueller-Auer S."/>
            <person name="Gabel C."/>
            <person name="Fuchs M."/>
            <person name="Fartmann B."/>
            <person name="Granderath K."/>
            <person name="Dauner D."/>
            <person name="Herzl A."/>
            <person name="Neumann S."/>
            <person name="Argiriou A."/>
            <person name="Vitale D."/>
            <person name="Liguori R."/>
            <person name="Piravandi E."/>
            <person name="Massenet O."/>
            <person name="Quigley F."/>
            <person name="Clabauld G."/>
            <person name="Muendlein A."/>
            <person name="Felber R."/>
            <person name="Schnabl S."/>
            <person name="Hiller R."/>
            <person name="Schmidt W."/>
            <person name="Lecharny A."/>
            <person name="Aubourg S."/>
            <person name="Chefdor F."/>
            <person name="Cooke R."/>
            <person name="Berger C."/>
            <person name="Monfort A."/>
            <person name="Casacuberta E."/>
            <person name="Gibbons T."/>
            <person name="Weber N."/>
            <person name="Vandenbol M."/>
            <person name="Bargues M."/>
            <person name="Terol J."/>
            <person name="Torres A."/>
            <person name="Perez-Perez A."/>
            <person name="Purnelle B."/>
            <person name="Bent E."/>
            <person name="Johnson S."/>
            <person name="Tacon D."/>
            <person name="Jesse T."/>
            <person name="Heijnen L."/>
            <person name="Schwarz S."/>
            <person name="Scholler P."/>
            <person name="Heber S."/>
            <person name="Francs P."/>
            <person name="Bielke C."/>
            <person name="Frishman D."/>
            <person name="Haase D."/>
            <person name="Lemcke K."/>
            <person name="Mewes H.-W."/>
            <person name="Stocker S."/>
            <person name="Zaccaria P."/>
            <person name="Bevan M."/>
            <person name="Wilson R.K."/>
            <person name="de la Bastide M."/>
            <person name="Habermann K."/>
            <person name="Parnell L."/>
            <person name="Dedhia N."/>
            <person name="Gnoj L."/>
            <person name="Schutz K."/>
            <person name="Huang E."/>
            <person name="Spiegel L."/>
            <person name="Sekhon M."/>
            <person name="Murray J."/>
            <person name="Sheet P."/>
            <person name="Cordes M."/>
            <person name="Abu-Threideh J."/>
            <person name="Stoneking T."/>
            <person name="Kalicki J."/>
            <person name="Graves T."/>
            <person name="Harmon G."/>
            <person name="Edwards J."/>
            <person name="Latreille P."/>
            <person name="Courtney L."/>
            <person name="Cloud J."/>
            <person name="Abbott A."/>
            <person name="Scott K."/>
            <person name="Johnson D."/>
            <person name="Minx P."/>
            <person name="Bentley D."/>
            <person name="Fulton B."/>
            <person name="Miller N."/>
            <person name="Greco T."/>
            <person name="Kemp K."/>
            <person name="Kramer J."/>
            <person name="Fulton L."/>
            <person name="Mardis E."/>
            <person name="Dante M."/>
            <person name="Pepin K."/>
            <person name="Hillier L.W."/>
            <person name="Nelson J."/>
            <person name="Spieth J."/>
            <person name="Ryan E."/>
            <person name="Andrews S."/>
            <person name="Geisel C."/>
            <person name="Layman D."/>
            <person name="Du H."/>
            <person name="Ali J."/>
            <person name="Berghoff A."/>
            <person name="Jones K."/>
            <person name="Drone K."/>
            <person name="Cotton M."/>
            <person name="Joshu C."/>
            <person name="Antonoiu B."/>
            <person name="Zidanic M."/>
            <person name="Strong C."/>
            <person name="Sun H."/>
            <person name="Lamar B."/>
            <person name="Yordan C."/>
            <person name="Ma P."/>
            <person name="Zhong J."/>
            <person name="Preston R."/>
            <person name="Vil D."/>
            <person name="Shekher M."/>
            <person name="Matero A."/>
            <person name="Shah R."/>
            <person name="Swaby I.K."/>
            <person name="O'Shaughnessy A."/>
            <person name="Rodriguez M."/>
            <person name="Hoffman J."/>
            <person name="Till S."/>
            <person name="Granat S."/>
            <person name="Shohdy N."/>
            <person name="Hasegawa A."/>
            <person name="Hameed A."/>
            <person name="Lodhi M."/>
            <person name="Johnson A."/>
            <person name="Chen E."/>
            <person name="Marra M.A."/>
            <person name="Martienssen R."/>
            <person name="McCombie W.R."/>
        </authorList>
    </citation>
    <scope>NUCLEOTIDE SEQUENCE [LARGE SCALE GENOMIC DNA]</scope>
    <source>
        <strain>cv. Columbia</strain>
    </source>
</reference>
<reference key="3">
    <citation type="journal article" date="2017" name="Plant J.">
        <title>Araport11: a complete reannotation of the Arabidopsis thaliana reference genome.</title>
        <authorList>
            <person name="Cheng C.Y."/>
            <person name="Krishnakumar V."/>
            <person name="Chan A.P."/>
            <person name="Thibaud-Nissen F."/>
            <person name="Schobel S."/>
            <person name="Town C.D."/>
        </authorList>
    </citation>
    <scope>GENOME REANNOTATION</scope>
    <source>
        <strain>cv. Columbia</strain>
    </source>
</reference>
<reference key="4">
    <citation type="journal article" date="2003" name="Science">
        <title>Empirical analysis of transcriptional activity in the Arabidopsis genome.</title>
        <authorList>
            <person name="Yamada K."/>
            <person name="Lim J."/>
            <person name="Dale J.M."/>
            <person name="Chen H."/>
            <person name="Shinn P."/>
            <person name="Palm C.J."/>
            <person name="Southwick A.M."/>
            <person name="Wu H.C."/>
            <person name="Kim C.J."/>
            <person name="Nguyen M."/>
            <person name="Pham P.K."/>
            <person name="Cheuk R.F."/>
            <person name="Karlin-Newmann G."/>
            <person name="Liu S.X."/>
            <person name="Lam B."/>
            <person name="Sakano H."/>
            <person name="Wu T."/>
            <person name="Yu G."/>
            <person name="Miranda M."/>
            <person name="Quach H.L."/>
            <person name="Tripp M."/>
            <person name="Chang C.H."/>
            <person name="Lee J.M."/>
            <person name="Toriumi M.J."/>
            <person name="Chan M.M."/>
            <person name="Tang C.C."/>
            <person name="Onodera C.S."/>
            <person name="Deng J.M."/>
            <person name="Akiyama K."/>
            <person name="Ansari Y."/>
            <person name="Arakawa T."/>
            <person name="Banh J."/>
            <person name="Banno F."/>
            <person name="Bowser L."/>
            <person name="Brooks S.Y."/>
            <person name="Carninci P."/>
            <person name="Chao Q."/>
            <person name="Choy N."/>
            <person name="Enju A."/>
            <person name="Goldsmith A.D."/>
            <person name="Gurjal M."/>
            <person name="Hansen N.F."/>
            <person name="Hayashizaki Y."/>
            <person name="Johnson-Hopson C."/>
            <person name="Hsuan V.W."/>
            <person name="Iida K."/>
            <person name="Karnes M."/>
            <person name="Khan S."/>
            <person name="Koesema E."/>
            <person name="Ishida J."/>
            <person name="Jiang P.X."/>
            <person name="Jones T."/>
            <person name="Kawai J."/>
            <person name="Kamiya A."/>
            <person name="Meyers C."/>
            <person name="Nakajima M."/>
            <person name="Narusaka M."/>
            <person name="Seki M."/>
            <person name="Sakurai T."/>
            <person name="Satou M."/>
            <person name="Tamse R."/>
            <person name="Vaysberg M."/>
            <person name="Wallender E.K."/>
            <person name="Wong C."/>
            <person name="Yamamura Y."/>
            <person name="Yuan S."/>
            <person name="Shinozaki K."/>
            <person name="Davis R.W."/>
            <person name="Theologis A."/>
            <person name="Ecker J.R."/>
        </authorList>
    </citation>
    <scope>NUCLEOTIDE SEQUENCE [LARGE SCALE MRNA]</scope>
    <source>
        <strain>cv. Columbia</strain>
    </source>
</reference>
<sequence length="143" mass="14967">MAMTTASTVFVLPANVTSVAGASSSRSSVSFLPMRNAGSRLVVRAAEDPAPASSSSKDSPAAAAAPDGATATKPKPPPIGPKRGSKVKILRRESYWFKNVGSVVAVDQDPKTRYPVVVRFAKVNYANISTNNYALDEVEEVAA</sequence>
<accession>Q9S831</accession>
<gene>
    <name type="primary">PSAE1</name>
    <name type="ordered locus">At4g28750</name>
    <name type="ORF">F16A16.140</name>
</gene>
<keyword id="KW-0002">3D-structure</keyword>
<keyword id="KW-0150">Chloroplast</keyword>
<keyword id="KW-0472">Membrane</keyword>
<keyword id="KW-0602">Photosynthesis</keyword>
<keyword id="KW-0603">Photosystem I</keyword>
<keyword id="KW-0934">Plastid</keyword>
<keyword id="KW-1185">Reference proteome</keyword>
<keyword id="KW-0793">Thylakoid</keyword>
<keyword id="KW-0809">Transit peptide</keyword>
<name>PSAE1_ARATH</name>
<comment type="function">
    <text evidence="1">Stabilizes the interaction between PsaC and the PSI core, assists the docking of the ferredoxin to PSI and interacts with ferredoxin-NADP oxidoreductase.</text>
</comment>
<comment type="subcellular location">
    <subcellularLocation>
        <location evidence="1">Plastid</location>
        <location evidence="1">Chloroplast thylakoid membrane</location>
        <topology evidence="1">Peripheral membrane protein</topology>
    </subcellularLocation>
</comment>
<comment type="PTM">
    <text evidence="1">2 isoforms may exist. With or without the N-terminal alanine (By similarity).</text>
</comment>
<comment type="similarity">
    <text evidence="3">Belongs to the PsaE family.</text>
</comment>
<proteinExistence type="evidence at protein level"/>
<evidence type="ECO:0000250" key="1"/>
<evidence type="ECO:0000256" key="2">
    <source>
        <dbReference type="SAM" id="MobiDB-lite"/>
    </source>
</evidence>
<evidence type="ECO:0000305" key="3"/>
<evidence type="ECO:0007829" key="4">
    <source>
        <dbReference type="PDB" id="2O01"/>
    </source>
</evidence>
<evidence type="ECO:0007829" key="5">
    <source>
        <dbReference type="PDB" id="2WSC"/>
    </source>
</evidence>
<evidence type="ECO:0007829" key="6">
    <source>
        <dbReference type="PDB" id="8J6Z"/>
    </source>
</evidence>
<evidence type="ECO:0007829" key="7">
    <source>
        <dbReference type="PDB" id="8J7A"/>
    </source>
</evidence>